<dbReference type="EMBL" id="V01106">
    <property type="status" value="NOT_ANNOTATED_CDS"/>
    <property type="molecule type" value="Genomic_RNA"/>
</dbReference>
<dbReference type="EMBL" id="AF389117">
    <property type="status" value="NOT_ANNOTATED_CDS"/>
    <property type="molecule type" value="Genomic_RNA"/>
</dbReference>
<dbReference type="EMBL" id="EF467820">
    <property type="status" value="NOT_ANNOTATED_CDS"/>
    <property type="molecule type" value="Genomic_RNA"/>
</dbReference>
<dbReference type="EMBL" id="CY009449">
    <property type="status" value="NOT_ANNOTATED_CDS"/>
    <property type="molecule type" value="Genomic_RNA"/>
</dbReference>
<dbReference type="RefSeq" id="YP_006495785.1">
    <molecule id="P0CK64-1"/>
    <property type="nucleotide sequence ID" value="NC_002022.1"/>
</dbReference>
<dbReference type="SMR" id="P0CK64"/>
<dbReference type="KEGG" id="vg:13229134"/>
<dbReference type="OrthoDB" id="495at10239"/>
<dbReference type="Proteomes" id="UP000009255">
    <property type="component" value="Genome"/>
</dbReference>
<dbReference type="Proteomes" id="UP000116373">
    <property type="component" value="Genome"/>
</dbReference>
<dbReference type="Proteomes" id="UP000170967">
    <property type="component" value="Genome"/>
</dbReference>
<dbReference type="GO" id="GO:0003723">
    <property type="term" value="F:RNA binding"/>
    <property type="evidence" value="ECO:0007669"/>
    <property type="project" value="InterPro"/>
</dbReference>
<dbReference type="GO" id="GO:0039694">
    <property type="term" value="P:viral RNA genome replication"/>
    <property type="evidence" value="ECO:0007669"/>
    <property type="project" value="InterPro"/>
</dbReference>
<dbReference type="GO" id="GO:0075523">
    <property type="term" value="P:viral translational frameshifting"/>
    <property type="evidence" value="ECO:0007669"/>
    <property type="project" value="UniProtKB-KW"/>
</dbReference>
<dbReference type="FunFam" id="3.40.91.90:FF:000001">
    <property type="entry name" value="Polymerase acidic protein"/>
    <property type="match status" value="1"/>
</dbReference>
<dbReference type="Gene3D" id="3.40.91.90">
    <property type="entry name" value="Influenza RNA-dependent RNA polymerase subunit PA, endonuclease domain"/>
    <property type="match status" value="1"/>
</dbReference>
<dbReference type="InterPro" id="IPR001009">
    <property type="entry name" value="PA/PA-X"/>
</dbReference>
<dbReference type="InterPro" id="IPR038372">
    <property type="entry name" value="PA/PA-X_sf"/>
</dbReference>
<dbReference type="Pfam" id="PF00603">
    <property type="entry name" value="Flu_PA"/>
    <property type="match status" value="1"/>
</dbReference>
<organismHost>
    <name type="scientific">Aves</name>
    <dbReference type="NCBI Taxonomy" id="8782"/>
</organismHost>
<organismHost>
    <name type="scientific">Homo sapiens</name>
    <name type="common">Human</name>
    <dbReference type="NCBI Taxonomy" id="9606"/>
</organismHost>
<organismHost>
    <name type="scientific">Sus scrofa</name>
    <name type="common">Pig</name>
    <dbReference type="NCBI Taxonomy" id="9823"/>
</organismHost>
<evidence type="ECO:0000250" key="1">
    <source>
        <dbReference type="UniProtKB" id="P0CK68"/>
    </source>
</evidence>
<evidence type="ECO:0000250" key="2">
    <source>
        <dbReference type="UniProtKB" id="P0DJW8"/>
    </source>
</evidence>
<evidence type="ECO:0000250" key="3">
    <source>
        <dbReference type="UniProtKB" id="P0DXO5"/>
    </source>
</evidence>
<evidence type="ECO:0000250" key="4">
    <source>
        <dbReference type="UniProtKB" id="P0DXO6"/>
    </source>
</evidence>
<evidence type="ECO:0000269" key="5">
    <source>
    </source>
</evidence>
<evidence type="ECO:0000305" key="6"/>
<sequence length="252" mass="29423">MEDFVRQCFNPMIVELAEKTMKEYGEDLKIETNKFAAICTHLEVCFMYSDFHFINEQGESIIVELGDPNALLKHRFEIIEGRDRTMAWTVVNSICNTTGAEKPKFLPDLYDYKENRFIEIGVTRREVHIYYLEKANKIKSEKTHIHIFSFTGEEMATKADYTLDEESRARIKTRLFTIRQEMASRGLWDSFVSPREEKRQLKKGLKSQEQCASLPTKVSRRTSPALKILEPMWMDSNRTATLRASCLKCPKK</sequence>
<reference key="1">
    <citation type="journal article" date="1982" name="Cell">
        <title>Nucleotide sequences of influenza virus segments 1 and 3 reveal mosaic structure of a small viral RNA segment.</title>
        <authorList>
            <person name="Fields S."/>
            <person name="Winter G."/>
        </authorList>
    </citation>
    <scope>NUCLEOTIDE SEQUENCE [GENOMIC RNA]</scope>
</reference>
<reference key="2">
    <citation type="journal article" date="2001" name="Philos. Trans. R. Soc. Lond., B, Biol. Sci.">
        <title>Plasmid-only rescue of influenza A virus vaccine candidates.</title>
        <authorList>
            <person name="Schickli J.H."/>
            <person name="Flandorfer A."/>
            <person name="Nakaya T."/>
            <person name="Martinez-Sobrido L."/>
            <person name="Garcia-Sastre A."/>
            <person name="Palese P."/>
        </authorList>
    </citation>
    <scope>NUCLEOTIDE SEQUENCE [GENOMIC RNA]</scope>
</reference>
<reference key="3">
    <citation type="journal article" date="2004" name="Virus Res.">
        <title>Efficient generation and growth of influenza virus A/PR/8/34 from eight cDNA fragments.</title>
        <authorList>
            <person name="de Wit E."/>
            <person name="Spronken M.I.J."/>
            <person name="Bestebroer T.M."/>
            <person name="Rimmelzwaan G.F."/>
            <person name="Osterhaus A.D.M.E."/>
            <person name="Fouchier R.A.M."/>
        </authorList>
    </citation>
    <scope>NUCLEOTIDE SEQUENCE [GENOMIC RNA]</scope>
    <scope>REVERSE GENETICS</scope>
</reference>
<reference key="4">
    <citation type="submission" date="2006-03" db="EMBL/GenBank/DDBJ databases">
        <title>The NIAID influenza genome sequencing project.</title>
        <authorList>
            <person name="Ghedin E."/>
            <person name="Spiro D."/>
            <person name="Miller N."/>
            <person name="Zaborsky J."/>
            <person name="Feldblyum T."/>
            <person name="Subbu V."/>
            <person name="Shumway M."/>
            <person name="Sparenborg J."/>
            <person name="Groveman L."/>
            <person name="Halpin R."/>
            <person name="Sitz J."/>
            <person name="Koo H."/>
            <person name="Salzberg S.L."/>
            <person name="Webster R.G."/>
            <person name="Hoffmann E."/>
            <person name="Krauss S."/>
            <person name="Naeve C."/>
            <person name="Bao Y."/>
            <person name="Bolotov P."/>
            <person name="Dernovoy D."/>
            <person name="Kiryutin B."/>
            <person name="Lipman D.J."/>
            <person name="Tatusova T."/>
        </authorList>
    </citation>
    <scope>NUCLEOTIDE SEQUENCE [GENOMIC RNA]</scope>
</reference>
<reference key="5">
    <citation type="journal article" date="2019" name="Cell Rep.">
        <title>The Influenza A Virus Endoribonuclease PA-X Usurps Host mRNA Processing Machinery to Limit Host Gene Expression.</title>
        <authorList>
            <person name="Gaucherand L."/>
            <person name="Porter B.K."/>
            <person name="Levene R.E."/>
            <person name="Price E.L."/>
            <person name="Schmaling S.K."/>
            <person name="Rycroft C.H."/>
            <person name="Kevorkian Y."/>
            <person name="McCormick C."/>
            <person name="Khaperskyy D.A."/>
            <person name="Gaglia M.M."/>
        </authorList>
    </citation>
    <scope>FUNCTION</scope>
    <scope>DOMAIN</scope>
</reference>
<protein>
    <recommendedName>
        <fullName>Protein PA-X</fullName>
    </recommendedName>
</protein>
<feature type="chain" id="PRO_0000419347" description="Protein PA-X">
    <location>
        <begin position="1"/>
        <end position="252"/>
    </location>
</feature>
<feature type="active site" evidence="1">
    <location>
        <position position="80"/>
    </location>
</feature>
<feature type="active site" evidence="1">
    <location>
        <position position="108"/>
    </location>
</feature>
<feature type="site" description="Important for efficient shutoff activity" evidence="4">
    <location>
        <position position="28"/>
    </location>
</feature>
<feature type="site" description="Important for efficient shutoff activity" evidence="4">
    <location>
        <position position="65"/>
    </location>
</feature>
<feature type="site" description="Important for efficient shutoff activity and nuclear localization" evidence="3">
    <location>
        <position position="195"/>
    </location>
</feature>
<feature type="site" description="Important for efficient shutoff activity and nuclear localization" evidence="3">
    <location>
        <position position="198"/>
    </location>
</feature>
<feature type="site" description="Important for efficient shutoff activity and nuclear localization" evidence="3">
    <location>
        <position position="199"/>
    </location>
</feature>
<feature type="site" description="Important for efficient shutoff activity" evidence="2">
    <location>
        <position position="202"/>
    </location>
</feature>
<feature type="site" description="Important for efficient shutoff activity" evidence="2">
    <location>
        <position position="203"/>
    </location>
</feature>
<feature type="site" description="Important for efficient shutoff activity" evidence="2">
    <location>
        <position position="206"/>
    </location>
</feature>
<keyword id="KW-1132">Decay of host mRNAs by virus</keyword>
<keyword id="KW-1262">Eukaryotic host gene expression shutoff by virus</keyword>
<keyword id="KW-1035">Host cytoplasm</keyword>
<keyword id="KW-1190">Host gene expression shutoff by virus</keyword>
<keyword id="KW-1192">Host mRNA suppression by virus</keyword>
<keyword id="KW-1048">Host nucleus</keyword>
<keyword id="KW-0945">Host-virus interaction</keyword>
<keyword id="KW-1185">Reference proteome</keyword>
<keyword id="KW-0688">Ribosomal frameshifting</keyword>
<proteinExistence type="inferred from homology"/>
<comment type="function">
    <text evidence="5 6">Plays a major role in the shutoff of the host protein expression by cleaving mRNAs probably via an endonuclease activity (PubMed:30995476). This host shutoff allows the virus to escape from the host antiviral response (Probable). Hijacks host RNA splicing machinery to selectively target host RNAs containing introns for destruction (PubMed:30995476). This may explain the preferential degradation of RNAs that have undergone co- or post-transcriptional processing (PubMed:30995476).</text>
</comment>
<comment type="subcellular location">
    <subcellularLocation>
        <location evidence="3">Host cytoplasm</location>
    </subcellularLocation>
    <subcellularLocation>
        <location evidence="3">Host nucleus</location>
    </subcellularLocation>
</comment>
<comment type="alternative products">
    <event type="ribosomal frameshifting"/>
    <isoform>
        <id>P0CK64-1</id>
        <name>PA-X</name>
        <sequence type="displayed"/>
    </isoform>
    <isoform>
        <id>P03433-1</id>
        <name>PA</name>
        <sequence type="external"/>
    </isoform>
</comment>
<comment type="domain">
    <text evidence="3 5">The probable endonuclease active site in the N-terminus and the basic amino acid cluster in the C-terminus are important for the shutoff activity. The C-terminus acts as a nuclear localization signal (By similarity). The C-terminus is recruited to host protein complexes involved in nuclear Pol II RNA processing (PubMed:30995476).</text>
</comment>
<comment type="similarity">
    <text evidence="6">Belongs to the influenza viruses PA-X family.</text>
</comment>
<organism>
    <name type="scientific">Influenza A virus (strain A/Puerto Rico/8/1934 H1N1)</name>
    <dbReference type="NCBI Taxonomy" id="211044"/>
    <lineage>
        <taxon>Viruses</taxon>
        <taxon>Riboviria</taxon>
        <taxon>Orthornavirae</taxon>
        <taxon>Negarnaviricota</taxon>
        <taxon>Polyploviricotina</taxon>
        <taxon>Insthoviricetes</taxon>
        <taxon>Articulavirales</taxon>
        <taxon>Orthomyxoviridae</taxon>
        <taxon>Alphainfluenzavirus</taxon>
        <taxon>Alphainfluenzavirus influenzae</taxon>
        <taxon>Influenza A virus</taxon>
    </lineage>
</organism>
<gene>
    <name type="primary">PA</name>
</gene>
<name>PAX_I34A1</name>
<accession>P0CK64</accession>